<feature type="chain" id="PRO_0000075029" description="Multifunctional protein ADE2">
    <location>
        <begin position="1"/>
        <end position="426"/>
    </location>
</feature>
<feature type="region of interest" description="SAICAR synthetase">
    <location>
        <begin position="1"/>
        <end position="261"/>
    </location>
</feature>
<feature type="region of interest" description="AIR carboxylase">
    <location>
        <begin position="262"/>
        <end position="426"/>
    </location>
</feature>
<proteinExistence type="evidence at transcript level"/>
<reference key="1">
    <citation type="journal article" date="1990" name="Proc. Natl. Acad. Sci. U.S.A.">
        <title>Cloning of a chicken liver cDNA encoding 5-aminoimidazole ribonucleotide carboxylase and 5-aminoimidazole-4-N-succinocarboxamide ribonucleotide synthetase by functional complementation of Escherichia coli pur mutants.</title>
        <authorList>
            <person name="Chen Z.D."/>
            <person name="Dixon J.E."/>
            <person name="Zalkin H."/>
        </authorList>
    </citation>
    <scope>NUCLEOTIDE SEQUENCE [MRNA]</scope>
    <source>
        <tissue>Liver</tissue>
    </source>
</reference>
<reference key="2">
    <citation type="journal article" date="1993" name="Mol. Cell. Biol.">
        <title>Coexpression of two closely linked avian genes for purine nucleotide synthesis from a bidirectional promoter.</title>
        <authorList>
            <person name="Gavalas A."/>
            <person name="Dixon J.E."/>
            <person name="Brayton K.A."/>
            <person name="Zalkin H."/>
        </authorList>
    </citation>
    <scope>NUCLEOTIDE SEQUENCE [GENOMIC DNA] OF 1-30</scope>
</reference>
<keyword id="KW-0067">ATP-binding</keyword>
<keyword id="KW-0210">Decarboxylase</keyword>
<keyword id="KW-0436">Ligase</keyword>
<keyword id="KW-0456">Lyase</keyword>
<keyword id="KW-0511">Multifunctional enzyme</keyword>
<keyword id="KW-0547">Nucleotide-binding</keyword>
<keyword id="KW-0658">Purine biosynthesis</keyword>
<keyword id="KW-1185">Reference proteome</keyword>
<comment type="catalytic activity">
    <reaction>
        <text>5-amino-1-(5-phospho-D-ribosyl)imidazole-4-carboxylate + L-aspartate + ATP = (2S)-2-[5-amino-1-(5-phospho-beta-D-ribosyl)imidazole-4-carboxamido]succinate + ADP + phosphate + 2 H(+)</text>
        <dbReference type="Rhea" id="RHEA:22628"/>
        <dbReference type="ChEBI" id="CHEBI:15378"/>
        <dbReference type="ChEBI" id="CHEBI:29991"/>
        <dbReference type="ChEBI" id="CHEBI:30616"/>
        <dbReference type="ChEBI" id="CHEBI:43474"/>
        <dbReference type="ChEBI" id="CHEBI:58443"/>
        <dbReference type="ChEBI" id="CHEBI:77657"/>
        <dbReference type="ChEBI" id="CHEBI:456216"/>
        <dbReference type="EC" id="6.3.2.6"/>
    </reaction>
</comment>
<comment type="catalytic activity">
    <reaction>
        <text>5-amino-1-(5-phospho-D-ribosyl)imidazole-4-carboxylate + H(+) = 5-amino-1-(5-phospho-beta-D-ribosyl)imidazole + CO2</text>
        <dbReference type="Rhea" id="RHEA:10792"/>
        <dbReference type="ChEBI" id="CHEBI:15378"/>
        <dbReference type="ChEBI" id="CHEBI:16526"/>
        <dbReference type="ChEBI" id="CHEBI:77657"/>
        <dbReference type="ChEBI" id="CHEBI:137981"/>
        <dbReference type="EC" id="4.1.1.21"/>
    </reaction>
</comment>
<comment type="pathway">
    <text>Purine metabolism; IMP biosynthesis via de novo pathway; 5-amino-1-(5-phospho-D-ribosyl)imidazole-4-carboxamide from 5-amino-1-(5-phospho-D-ribosyl)imidazole-4-carboxylate: step 1/2.</text>
</comment>
<comment type="pathway">
    <text>Purine metabolism; IMP biosynthesis via de novo pathway; 5-amino-1-(5-phospho-D-ribosyl)imidazole-4-carboxylate from 5-amino-1-(5-phospho-D-ribosyl)imidazole (carboxylase route): step 1/1.</text>
</comment>
<comment type="subunit">
    <text evidence="1">Homooctamer.</text>
</comment>
<comment type="similarity">
    <text evidence="2">In the N-terminal section; belongs to the SAICAR synthetase family.</text>
</comment>
<comment type="similarity">
    <text evidence="2">In the C-terminal section; belongs to the AIR carboxylase family. Class II subfamily.</text>
</comment>
<protein>
    <recommendedName>
        <fullName>Multifunctional protein ADE2</fullName>
    </recommendedName>
    <domain>
        <recommendedName>
            <fullName>Phosphoribosylaminoimidazole-succinocarboxamide synthase</fullName>
            <ecNumber>6.3.2.6</ecNumber>
        </recommendedName>
        <alternativeName>
            <fullName>SAICAR synthetase</fullName>
        </alternativeName>
    </domain>
    <domain>
        <recommendedName>
            <fullName>Phosphoribosylaminoimidazole carboxylase</fullName>
            <ecNumber>4.1.1.21</ecNumber>
        </recommendedName>
        <alternativeName>
            <fullName>AIR carboxylase</fullName>
            <shortName>AIRC</shortName>
        </alternativeName>
    </domain>
</protein>
<name>PUR6_CHICK</name>
<accession>P38024</accession>
<accession>P87465</accession>
<evidence type="ECO:0000250" key="1"/>
<evidence type="ECO:0000305" key="2"/>
<gene>
    <name type="primary">AIRC</name>
</gene>
<dbReference type="EC" id="6.3.2.6"/>
<dbReference type="EC" id="4.1.1.21"/>
<dbReference type="EMBL" id="M31764">
    <property type="protein sequence ID" value="AAA48601.1"/>
    <property type="molecule type" value="mRNA"/>
</dbReference>
<dbReference type="EMBL" id="L12533">
    <property type="protein sequence ID" value="AAA17894.1"/>
    <property type="molecule type" value="Genomic_DNA"/>
</dbReference>
<dbReference type="PIR" id="A35641">
    <property type="entry name" value="A35641"/>
</dbReference>
<dbReference type="RefSeq" id="NP_990855.1">
    <property type="nucleotide sequence ID" value="NM_205524.2"/>
</dbReference>
<dbReference type="RefSeq" id="XP_015140912.1">
    <property type="nucleotide sequence ID" value="XM_015285426.1"/>
</dbReference>
<dbReference type="SMR" id="P38024"/>
<dbReference type="BioGRID" id="676778">
    <property type="interactions" value="1"/>
</dbReference>
<dbReference type="FunCoup" id="P38024">
    <property type="interactions" value="1839"/>
</dbReference>
<dbReference type="STRING" id="9031.ENSGALP00000072742"/>
<dbReference type="BindingDB" id="P38024"/>
<dbReference type="ChEMBL" id="CHEMBL5312"/>
<dbReference type="PaxDb" id="9031-ENSGALP00000022269"/>
<dbReference type="GeneID" id="396534"/>
<dbReference type="KEGG" id="gga:396534"/>
<dbReference type="CTD" id="10606"/>
<dbReference type="VEuPathDB" id="HostDB:geneid_396534"/>
<dbReference type="eggNOG" id="KOG2835">
    <property type="taxonomic scope" value="Eukaryota"/>
</dbReference>
<dbReference type="HOGENOM" id="CLU_061495_1_0_1"/>
<dbReference type="InParanoid" id="P38024"/>
<dbReference type="OrthoDB" id="9991235at2759"/>
<dbReference type="PhylomeDB" id="P38024"/>
<dbReference type="TreeFam" id="TF106384"/>
<dbReference type="Reactome" id="R-GGA-419140">
    <property type="pathway name" value="De novo synthesis of IMP"/>
</dbReference>
<dbReference type="UniPathway" id="UPA00074">
    <property type="reaction ID" value="UER00130"/>
</dbReference>
<dbReference type="UniPathway" id="UPA00074">
    <property type="reaction ID" value="UER00131"/>
</dbReference>
<dbReference type="PRO" id="PR:P38024"/>
<dbReference type="Proteomes" id="UP000000539">
    <property type="component" value="Unassembled WGS sequence"/>
</dbReference>
<dbReference type="GO" id="GO:0005829">
    <property type="term" value="C:cytosol"/>
    <property type="evidence" value="ECO:0000304"/>
    <property type="project" value="Reactome"/>
</dbReference>
<dbReference type="GO" id="GO:0005524">
    <property type="term" value="F:ATP binding"/>
    <property type="evidence" value="ECO:0007669"/>
    <property type="project" value="UniProtKB-KW"/>
</dbReference>
<dbReference type="GO" id="GO:0004638">
    <property type="term" value="F:phosphoribosylaminoimidazole carboxylase activity"/>
    <property type="evidence" value="ECO:0007669"/>
    <property type="project" value="UniProtKB-EC"/>
</dbReference>
<dbReference type="GO" id="GO:0004639">
    <property type="term" value="F:phosphoribosylaminoimidazolesuccinocarboxamide synthase activity"/>
    <property type="evidence" value="ECO:0000318"/>
    <property type="project" value="GO_Central"/>
</dbReference>
<dbReference type="GO" id="GO:0006189">
    <property type="term" value="P:'de novo' IMP biosynthetic process"/>
    <property type="evidence" value="ECO:0000318"/>
    <property type="project" value="GO_Central"/>
</dbReference>
<dbReference type="CDD" id="cd01416">
    <property type="entry name" value="SAICAR_synt_Ade5"/>
    <property type="match status" value="1"/>
</dbReference>
<dbReference type="FunFam" id="3.30.200.20:FF:000183">
    <property type="entry name" value="Probable multifunctional protein ADE2"/>
    <property type="match status" value="1"/>
</dbReference>
<dbReference type="FunFam" id="3.30.470.20:FF:000020">
    <property type="entry name" value="Probable multifunctional protein ADE2"/>
    <property type="match status" value="1"/>
</dbReference>
<dbReference type="FunFam" id="3.40.50.1970:FF:000006">
    <property type="entry name" value="Probable multifunctional protein ADE2"/>
    <property type="match status" value="1"/>
</dbReference>
<dbReference type="Gene3D" id="3.40.50.1970">
    <property type="match status" value="1"/>
</dbReference>
<dbReference type="Gene3D" id="3.30.470.20">
    <property type="entry name" value="ATP-grasp fold, B domain"/>
    <property type="match status" value="1"/>
</dbReference>
<dbReference type="Gene3D" id="3.30.200.20">
    <property type="entry name" value="Phosphorylase Kinase, domain 1"/>
    <property type="match status" value="1"/>
</dbReference>
<dbReference type="HAMAP" id="MF_02045">
    <property type="entry name" value="PurE_classII"/>
    <property type="match status" value="1"/>
</dbReference>
<dbReference type="HAMAP" id="MF_00137">
    <property type="entry name" value="SAICAR_synth"/>
    <property type="match status" value="1"/>
</dbReference>
<dbReference type="InterPro" id="IPR033626">
    <property type="entry name" value="PurE_classII"/>
</dbReference>
<dbReference type="InterPro" id="IPR000031">
    <property type="entry name" value="PurE_dom"/>
</dbReference>
<dbReference type="InterPro" id="IPR028923">
    <property type="entry name" value="SAICAR_synt/ADE2_N"/>
</dbReference>
<dbReference type="InterPro" id="IPR050089">
    <property type="entry name" value="SAICAR_synthetase"/>
</dbReference>
<dbReference type="InterPro" id="IPR018236">
    <property type="entry name" value="SAICAR_synthetase_CS"/>
</dbReference>
<dbReference type="NCBIfam" id="TIGR01162">
    <property type="entry name" value="purE"/>
    <property type="match status" value="1"/>
</dbReference>
<dbReference type="PANTHER" id="PTHR43599:SF11">
    <property type="entry name" value="BIFUNCTIONAL PHOSPHORIBOSYLAMINOIMIDAZOLE CARBOXYLASE_PHOSPHORIBOSYLAMINOIMIDAZOLE SUCCINOCARBOXAMIDE SYNTHETASE"/>
    <property type="match status" value="1"/>
</dbReference>
<dbReference type="PANTHER" id="PTHR43599">
    <property type="entry name" value="MULTIFUNCTIONAL PROTEIN ADE2"/>
    <property type="match status" value="1"/>
</dbReference>
<dbReference type="Pfam" id="PF00731">
    <property type="entry name" value="AIRC"/>
    <property type="match status" value="1"/>
</dbReference>
<dbReference type="Pfam" id="PF01259">
    <property type="entry name" value="SAICAR_synt"/>
    <property type="match status" value="1"/>
</dbReference>
<dbReference type="SMART" id="SM01001">
    <property type="entry name" value="AIRC"/>
    <property type="match status" value="1"/>
</dbReference>
<dbReference type="SUPFAM" id="SSF52255">
    <property type="entry name" value="N5-CAIR mutase (phosphoribosylaminoimidazole carboxylase, PurE)"/>
    <property type="match status" value="1"/>
</dbReference>
<dbReference type="SUPFAM" id="SSF56104">
    <property type="entry name" value="SAICAR synthase-like"/>
    <property type="match status" value="1"/>
</dbReference>
<dbReference type="PROSITE" id="PS01057">
    <property type="entry name" value="SAICAR_SYNTHETASE_1"/>
    <property type="match status" value="1"/>
</dbReference>
<dbReference type="PROSITE" id="PS01058">
    <property type="entry name" value="SAICAR_SYNTHETASE_2"/>
    <property type="match status" value="1"/>
</dbReference>
<sequence length="426" mass="47240">MAPAASELKLGKKVNEGKTKEVYELPDIPGCVLMQSKDQITAGNAARKDRMEGKAAISNTTTSCVFQLLQEAGIKTAFVRKQSDTAFIAAHCEMIPIEWVCRRIATGSFLKRNPGVKEGYKFYPPKIEMFYKDDANNDPQWSEEQLIEAKFSFAGLTIGKTEVDIMARSTQAIFEILEKSWQPQNCTLVDLKIEFGVNILTKEIVLADVIDNDSWRLWPSGDRSQQKDKQSYRDLKEVTPEALQMVKRNFEWVAERVELLLKTKSQGRVVVLMGSTSDLGHCEKIKKACATFGIPCELRVTSAHKGPDETLRIKAEYEGDGIPTVFVAVAGRSNGLGPVMSGNTAYPVVNCPPLSSDWGAQDVWSSLRLPSGLGCPTTLSPEGAAQFAAQIFGLNNHLVWAKLRSNMLNTWISLKQADKKLRECTL</sequence>
<organism>
    <name type="scientific">Gallus gallus</name>
    <name type="common">Chicken</name>
    <dbReference type="NCBI Taxonomy" id="9031"/>
    <lineage>
        <taxon>Eukaryota</taxon>
        <taxon>Metazoa</taxon>
        <taxon>Chordata</taxon>
        <taxon>Craniata</taxon>
        <taxon>Vertebrata</taxon>
        <taxon>Euteleostomi</taxon>
        <taxon>Archelosauria</taxon>
        <taxon>Archosauria</taxon>
        <taxon>Dinosauria</taxon>
        <taxon>Saurischia</taxon>
        <taxon>Theropoda</taxon>
        <taxon>Coelurosauria</taxon>
        <taxon>Aves</taxon>
        <taxon>Neognathae</taxon>
        <taxon>Galloanserae</taxon>
        <taxon>Galliformes</taxon>
        <taxon>Phasianidae</taxon>
        <taxon>Phasianinae</taxon>
        <taxon>Gallus</taxon>
    </lineage>
</organism>